<accession>A5CD09</accession>
<protein>
    <recommendedName>
        <fullName evidence="1">Deoxyuridine 5'-triphosphate nucleotidohydrolase</fullName>
        <shortName evidence="1">dUTPase</shortName>
        <ecNumber evidence="1">3.6.1.23</ecNumber>
    </recommendedName>
    <alternativeName>
        <fullName evidence="1">dUTP pyrophosphatase</fullName>
    </alternativeName>
</protein>
<keyword id="KW-0378">Hydrolase</keyword>
<keyword id="KW-0460">Magnesium</keyword>
<keyword id="KW-0479">Metal-binding</keyword>
<keyword id="KW-0546">Nucleotide metabolism</keyword>
<keyword id="KW-1185">Reference proteome</keyword>
<feature type="chain" id="PRO_1000057777" description="Deoxyuridine 5'-triphosphate nucleotidohydrolase">
    <location>
        <begin position="1"/>
        <end position="148"/>
    </location>
</feature>
<feature type="binding site" evidence="1">
    <location>
        <begin position="67"/>
        <end position="69"/>
    </location>
    <ligand>
        <name>substrate</name>
    </ligand>
</feature>
<feature type="binding site" evidence="1">
    <location>
        <position position="80"/>
    </location>
    <ligand>
        <name>substrate</name>
    </ligand>
</feature>
<feature type="binding site" evidence="1">
    <location>
        <begin position="84"/>
        <end position="86"/>
    </location>
    <ligand>
        <name>substrate</name>
    </ligand>
</feature>
<feature type="binding site" evidence="1">
    <location>
        <position position="94"/>
    </location>
    <ligand>
        <name>substrate</name>
    </ligand>
</feature>
<proteinExistence type="inferred from homology"/>
<evidence type="ECO:0000255" key="1">
    <source>
        <dbReference type="HAMAP-Rule" id="MF_00116"/>
    </source>
</evidence>
<gene>
    <name evidence="1" type="primary">dut</name>
    <name type="ordered locus">OTBS_0580</name>
</gene>
<organism>
    <name type="scientific">Orientia tsutsugamushi (strain Boryong)</name>
    <name type="common">Rickettsia tsutsugamushi</name>
    <dbReference type="NCBI Taxonomy" id="357244"/>
    <lineage>
        <taxon>Bacteria</taxon>
        <taxon>Pseudomonadati</taxon>
        <taxon>Pseudomonadota</taxon>
        <taxon>Alphaproteobacteria</taxon>
        <taxon>Rickettsiales</taxon>
        <taxon>Rickettsiaceae</taxon>
        <taxon>Rickettsieae</taxon>
        <taxon>Orientia</taxon>
    </lineage>
</organism>
<reference key="1">
    <citation type="journal article" date="2007" name="Proc. Natl. Acad. Sci. U.S.A.">
        <title>The Orientia tsutsugamushi genome reveals massive proliferation of conjugative type IV secretion system and host-cell interaction genes.</title>
        <authorList>
            <person name="Cho N.-H."/>
            <person name="Kim H.-R."/>
            <person name="Lee J.-H."/>
            <person name="Kim S.-Y."/>
            <person name="Kim J."/>
            <person name="Cha S."/>
            <person name="Kim S.-Y."/>
            <person name="Darby A.C."/>
            <person name="Fuxelius H.-H."/>
            <person name="Yin J."/>
            <person name="Kim J.H."/>
            <person name="Kim J."/>
            <person name="Lee S.J."/>
            <person name="Koh Y.-S."/>
            <person name="Jang W.-J."/>
            <person name="Park K.-H."/>
            <person name="Andersson S.G.E."/>
            <person name="Choi M.-S."/>
            <person name="Kim I.-S."/>
        </authorList>
    </citation>
    <scope>NUCLEOTIDE SEQUENCE [LARGE SCALE GENOMIC DNA]</scope>
    <source>
        <strain>Boryong</strain>
    </source>
</reference>
<name>DUT_ORITB</name>
<comment type="function">
    <text evidence="1">This enzyme is involved in nucleotide metabolism: it produces dUMP, the immediate precursor of thymidine nucleotides and it decreases the intracellular concentration of dUTP so that uracil cannot be incorporated into DNA.</text>
</comment>
<comment type="catalytic activity">
    <reaction evidence="1">
        <text>dUTP + H2O = dUMP + diphosphate + H(+)</text>
        <dbReference type="Rhea" id="RHEA:10248"/>
        <dbReference type="ChEBI" id="CHEBI:15377"/>
        <dbReference type="ChEBI" id="CHEBI:15378"/>
        <dbReference type="ChEBI" id="CHEBI:33019"/>
        <dbReference type="ChEBI" id="CHEBI:61555"/>
        <dbReference type="ChEBI" id="CHEBI:246422"/>
        <dbReference type="EC" id="3.6.1.23"/>
    </reaction>
</comment>
<comment type="cofactor">
    <cofactor evidence="1">
        <name>Mg(2+)</name>
        <dbReference type="ChEBI" id="CHEBI:18420"/>
    </cofactor>
</comment>
<comment type="pathway">
    <text evidence="1">Pyrimidine metabolism; dUMP biosynthesis; dUMP from dCTP (dUTP route): step 2/2.</text>
</comment>
<comment type="similarity">
    <text evidence="1">Belongs to the dUTPase family.</text>
</comment>
<sequence>MKVKIKQIYQFEGASSLPAYSTNGSAGMDLYAAIASPMIIKPHETALVPAGIAISLPYGYEAQIRSRSGLASKFGVIVLNSPGTIDSDYRGELKIIMINLGQKDFQLTPAMRIAQMVIAKYEVVSWELVDDLDETERGKNGFGSSGLK</sequence>
<dbReference type="EC" id="3.6.1.23" evidence="1"/>
<dbReference type="EMBL" id="AM494475">
    <property type="protein sequence ID" value="CAM79646.1"/>
    <property type="molecule type" value="Genomic_DNA"/>
</dbReference>
<dbReference type="RefSeq" id="WP_011944559.1">
    <property type="nucleotide sequence ID" value="NC_009488.1"/>
</dbReference>
<dbReference type="SMR" id="A5CD09"/>
<dbReference type="KEGG" id="ots:OTBS_0580"/>
<dbReference type="eggNOG" id="COG0756">
    <property type="taxonomic scope" value="Bacteria"/>
</dbReference>
<dbReference type="HOGENOM" id="CLU_068508_1_0_5"/>
<dbReference type="UniPathway" id="UPA00610">
    <property type="reaction ID" value="UER00666"/>
</dbReference>
<dbReference type="Proteomes" id="UP000001565">
    <property type="component" value="Chromosome"/>
</dbReference>
<dbReference type="GO" id="GO:0004170">
    <property type="term" value="F:dUTP diphosphatase activity"/>
    <property type="evidence" value="ECO:0007669"/>
    <property type="project" value="UniProtKB-UniRule"/>
</dbReference>
<dbReference type="GO" id="GO:0000287">
    <property type="term" value="F:magnesium ion binding"/>
    <property type="evidence" value="ECO:0007669"/>
    <property type="project" value="UniProtKB-UniRule"/>
</dbReference>
<dbReference type="GO" id="GO:0006226">
    <property type="term" value="P:dUMP biosynthetic process"/>
    <property type="evidence" value="ECO:0007669"/>
    <property type="project" value="UniProtKB-UniRule"/>
</dbReference>
<dbReference type="GO" id="GO:0046081">
    <property type="term" value="P:dUTP catabolic process"/>
    <property type="evidence" value="ECO:0007669"/>
    <property type="project" value="InterPro"/>
</dbReference>
<dbReference type="CDD" id="cd07557">
    <property type="entry name" value="trimeric_dUTPase"/>
    <property type="match status" value="1"/>
</dbReference>
<dbReference type="FunFam" id="2.70.40.10:FF:000002">
    <property type="entry name" value="dUTP diphosphatase"/>
    <property type="match status" value="1"/>
</dbReference>
<dbReference type="Gene3D" id="2.70.40.10">
    <property type="match status" value="1"/>
</dbReference>
<dbReference type="HAMAP" id="MF_00116">
    <property type="entry name" value="dUTPase_bact"/>
    <property type="match status" value="1"/>
</dbReference>
<dbReference type="InterPro" id="IPR008181">
    <property type="entry name" value="dUTPase"/>
</dbReference>
<dbReference type="InterPro" id="IPR029054">
    <property type="entry name" value="dUTPase-like"/>
</dbReference>
<dbReference type="InterPro" id="IPR036157">
    <property type="entry name" value="dUTPase-like_sf"/>
</dbReference>
<dbReference type="InterPro" id="IPR033704">
    <property type="entry name" value="dUTPase_trimeric"/>
</dbReference>
<dbReference type="NCBIfam" id="TIGR00576">
    <property type="entry name" value="dut"/>
    <property type="match status" value="1"/>
</dbReference>
<dbReference type="NCBIfam" id="NF001862">
    <property type="entry name" value="PRK00601.1"/>
    <property type="match status" value="1"/>
</dbReference>
<dbReference type="PANTHER" id="PTHR11241">
    <property type="entry name" value="DEOXYURIDINE 5'-TRIPHOSPHATE NUCLEOTIDOHYDROLASE"/>
    <property type="match status" value="1"/>
</dbReference>
<dbReference type="PANTHER" id="PTHR11241:SF0">
    <property type="entry name" value="DEOXYURIDINE 5'-TRIPHOSPHATE NUCLEOTIDOHYDROLASE"/>
    <property type="match status" value="1"/>
</dbReference>
<dbReference type="Pfam" id="PF00692">
    <property type="entry name" value="dUTPase"/>
    <property type="match status" value="1"/>
</dbReference>
<dbReference type="SUPFAM" id="SSF51283">
    <property type="entry name" value="dUTPase-like"/>
    <property type="match status" value="1"/>
</dbReference>